<comment type="function">
    <text evidence="1">Component of the proteasome core, a large protease complex with broad specificity involved in protein degradation.</text>
</comment>
<comment type="activity regulation">
    <text evidence="1">The formation of the proteasomal ATPase PAN-20S proteasome complex, via the docking of the C-termini of PAN into the intersubunit pockets in the alpha-rings, triggers opening of the gate for substrate entry. Interconversion between the open-gate and close-gate conformations leads to a dynamic regulation of the 20S proteasome proteolysis activity.</text>
</comment>
<comment type="subunit">
    <text evidence="1">The 20S proteasome core is composed of 14 alpha and 14 beta subunits that assemble into four stacked heptameric rings, resulting in a barrel-shaped structure. The two inner rings, each composed of seven catalytic beta subunits, are sandwiched by two outer rings, each composed of seven alpha subunits. The catalytic chamber with the active sites is on the inside of the barrel. Has a gated structure, the ends of the cylinder being occluded by the N-termini of the alpha-subunits. Is capped at one or both ends by the proteasome regulatory ATPase, PAN.</text>
</comment>
<comment type="subcellular location">
    <subcellularLocation>
        <location evidence="1">Cytoplasm</location>
    </subcellularLocation>
</comment>
<comment type="similarity">
    <text evidence="1">Belongs to the peptidase T1A family.</text>
</comment>
<reference key="1">
    <citation type="journal article" date="2009" name="Stand. Genomic Sci.">
        <title>Complete genome sequence of Methanoculleus marisnigri Romesser et al. 1981 type strain JR1.</title>
        <authorList>
            <person name="Anderson I.J."/>
            <person name="Sieprawska-Lupa M."/>
            <person name="Lapidus A."/>
            <person name="Nolan M."/>
            <person name="Copeland A."/>
            <person name="Glavina Del Rio T."/>
            <person name="Tice H."/>
            <person name="Dalin E."/>
            <person name="Barry K."/>
            <person name="Saunders E."/>
            <person name="Han C."/>
            <person name="Brettin T."/>
            <person name="Detter J.C."/>
            <person name="Bruce D."/>
            <person name="Mikhailova N."/>
            <person name="Pitluck S."/>
            <person name="Hauser L."/>
            <person name="Land M."/>
            <person name="Lucas S."/>
            <person name="Richardson P."/>
            <person name="Whitman W.B."/>
            <person name="Kyrpides N.C."/>
        </authorList>
    </citation>
    <scope>NUCLEOTIDE SEQUENCE [LARGE SCALE GENOMIC DNA]</scope>
    <source>
        <strain>ATCC 35101 / DSM 1498 / JR1</strain>
    </source>
</reference>
<proteinExistence type="inferred from homology"/>
<dbReference type="EMBL" id="CP000562">
    <property type="protein sequence ID" value="ABN57605.1"/>
    <property type="molecule type" value="Genomic_DNA"/>
</dbReference>
<dbReference type="RefSeq" id="WP_011844516.1">
    <property type="nucleotide sequence ID" value="NC_009051.1"/>
</dbReference>
<dbReference type="SMR" id="A3CW55"/>
<dbReference type="STRING" id="368407.Memar_1678"/>
<dbReference type="GeneID" id="4848355"/>
<dbReference type="GeneID" id="76729748"/>
<dbReference type="KEGG" id="mem:Memar_1678"/>
<dbReference type="eggNOG" id="arCOG00971">
    <property type="taxonomic scope" value="Archaea"/>
</dbReference>
<dbReference type="HOGENOM" id="CLU_035750_4_1_2"/>
<dbReference type="OrthoDB" id="9421at2157"/>
<dbReference type="Proteomes" id="UP000002146">
    <property type="component" value="Chromosome"/>
</dbReference>
<dbReference type="GO" id="GO:0005737">
    <property type="term" value="C:cytoplasm"/>
    <property type="evidence" value="ECO:0007669"/>
    <property type="project" value="UniProtKB-SubCell"/>
</dbReference>
<dbReference type="GO" id="GO:0019773">
    <property type="term" value="C:proteasome core complex, alpha-subunit complex"/>
    <property type="evidence" value="ECO:0000250"/>
    <property type="project" value="UniProtKB"/>
</dbReference>
<dbReference type="GO" id="GO:0004298">
    <property type="term" value="F:threonine-type endopeptidase activity"/>
    <property type="evidence" value="ECO:0007669"/>
    <property type="project" value="InterPro"/>
</dbReference>
<dbReference type="GO" id="GO:0010498">
    <property type="term" value="P:proteasomal protein catabolic process"/>
    <property type="evidence" value="ECO:0007669"/>
    <property type="project" value="UniProtKB-UniRule"/>
</dbReference>
<dbReference type="GO" id="GO:0006511">
    <property type="term" value="P:ubiquitin-dependent protein catabolic process"/>
    <property type="evidence" value="ECO:0007669"/>
    <property type="project" value="InterPro"/>
</dbReference>
<dbReference type="CDD" id="cd03756">
    <property type="entry name" value="proteasome_alpha_archeal"/>
    <property type="match status" value="1"/>
</dbReference>
<dbReference type="FunFam" id="3.60.20.10:FF:000004">
    <property type="entry name" value="Proteasome subunit alpha type-4"/>
    <property type="match status" value="1"/>
</dbReference>
<dbReference type="Gene3D" id="3.60.20.10">
    <property type="entry name" value="Glutamine Phosphoribosylpyrophosphate, subunit 1, domain 1"/>
    <property type="match status" value="1"/>
</dbReference>
<dbReference type="HAMAP" id="MF_00289_A">
    <property type="entry name" value="Proteasome_A_A"/>
    <property type="match status" value="1"/>
</dbReference>
<dbReference type="InterPro" id="IPR029055">
    <property type="entry name" value="Ntn_hydrolases_N"/>
</dbReference>
<dbReference type="InterPro" id="IPR050115">
    <property type="entry name" value="Proteasome_alpha"/>
</dbReference>
<dbReference type="InterPro" id="IPR023332">
    <property type="entry name" value="Proteasome_alpha-type"/>
</dbReference>
<dbReference type="InterPro" id="IPR019982">
    <property type="entry name" value="Proteasome_asu_arc"/>
</dbReference>
<dbReference type="InterPro" id="IPR000426">
    <property type="entry name" value="Proteasome_asu_N"/>
</dbReference>
<dbReference type="InterPro" id="IPR001353">
    <property type="entry name" value="Proteasome_sua/b"/>
</dbReference>
<dbReference type="NCBIfam" id="TIGR03633">
    <property type="entry name" value="arc_protsome_A"/>
    <property type="match status" value="1"/>
</dbReference>
<dbReference type="NCBIfam" id="NF003075">
    <property type="entry name" value="PRK03996.1"/>
    <property type="match status" value="1"/>
</dbReference>
<dbReference type="PANTHER" id="PTHR11599">
    <property type="entry name" value="PROTEASOME SUBUNIT ALPHA/BETA"/>
    <property type="match status" value="1"/>
</dbReference>
<dbReference type="Pfam" id="PF00227">
    <property type="entry name" value="Proteasome"/>
    <property type="match status" value="1"/>
</dbReference>
<dbReference type="Pfam" id="PF10584">
    <property type="entry name" value="Proteasome_A_N"/>
    <property type="match status" value="1"/>
</dbReference>
<dbReference type="SMART" id="SM00948">
    <property type="entry name" value="Proteasome_A_N"/>
    <property type="match status" value="1"/>
</dbReference>
<dbReference type="SUPFAM" id="SSF56235">
    <property type="entry name" value="N-terminal nucleophile aminohydrolases (Ntn hydrolases)"/>
    <property type="match status" value="1"/>
</dbReference>
<dbReference type="PROSITE" id="PS00388">
    <property type="entry name" value="PROTEASOME_ALPHA_1"/>
    <property type="match status" value="1"/>
</dbReference>
<dbReference type="PROSITE" id="PS51475">
    <property type="entry name" value="PROTEASOME_ALPHA_2"/>
    <property type="match status" value="1"/>
</dbReference>
<name>PSA_METMJ</name>
<protein>
    <recommendedName>
        <fullName evidence="1">Proteasome subunit alpha</fullName>
    </recommendedName>
    <alternativeName>
        <fullName evidence="1">20S proteasome alpha subunit</fullName>
    </alternativeName>
    <alternativeName>
        <fullName evidence="1">Proteasome core protein PsmA</fullName>
    </alternativeName>
</protein>
<feature type="chain" id="PRO_1000021790" description="Proteasome subunit alpha">
    <location>
        <begin position="1"/>
        <end position="240"/>
    </location>
</feature>
<sequence length="240" mass="26331">MQPQYQMGYDRAITVFSPDGRLYQVEYAREAVKRGTTAVGIKCSEGVVLIVDKRVTSRLLEPVSIEKIFKIDAHIGVASSGLVGDARSLVDRARVESQINRVSYNEPINVEILAKKLCDHMQTYTQFGGARPYGTALLIAGVSDGEARLFETDPSGTLLEYKATGIGTGRPAVIKTFEDEYQEDADFSGAIRLGIKALHAATEGKLDVSAIEIGVVSIETGEFRKMEKDEVKAYVDQFEE</sequence>
<organism>
    <name type="scientific">Methanoculleus marisnigri (strain ATCC 35101 / DSM 1498 / JR1)</name>
    <dbReference type="NCBI Taxonomy" id="368407"/>
    <lineage>
        <taxon>Archaea</taxon>
        <taxon>Methanobacteriati</taxon>
        <taxon>Methanobacteriota</taxon>
        <taxon>Stenosarchaea group</taxon>
        <taxon>Methanomicrobia</taxon>
        <taxon>Methanomicrobiales</taxon>
        <taxon>Methanomicrobiaceae</taxon>
        <taxon>Methanoculleus</taxon>
    </lineage>
</organism>
<keyword id="KW-0963">Cytoplasm</keyword>
<keyword id="KW-0647">Proteasome</keyword>
<evidence type="ECO:0000255" key="1">
    <source>
        <dbReference type="HAMAP-Rule" id="MF_00289"/>
    </source>
</evidence>
<accession>A3CW55</accession>
<gene>
    <name evidence="1" type="primary">psmA</name>
    <name type="ordered locus">Memar_1678</name>
</gene>